<evidence type="ECO:0000255" key="1">
    <source>
        <dbReference type="HAMAP-Rule" id="MF_01631"/>
    </source>
</evidence>
<evidence type="ECO:0007829" key="2">
    <source>
        <dbReference type="PDB" id="7K47"/>
    </source>
</evidence>
<comment type="function">
    <text evidence="1">Catalyzes the last two sequential reactions in the de novo biosynthetic pathway for UDP-N-acetylglucosamine (UDP-GlcNAc). The C-terminal domain catalyzes the transfer of acetyl group from acetyl coenzyme A to glucosamine-1-phosphate (GlcN-1-P) to produce N-acetylglucosamine-1-phosphate (GlcNAc-1-P), which is converted into UDP-GlcNAc by the transfer of uridine 5-monophosphate (from uridine 5-triphosphate), a reaction catalyzed by the N-terminal domain.</text>
</comment>
<comment type="catalytic activity">
    <reaction evidence="1">
        <text>alpha-D-glucosamine 1-phosphate + acetyl-CoA = N-acetyl-alpha-D-glucosamine 1-phosphate + CoA + H(+)</text>
        <dbReference type="Rhea" id="RHEA:13725"/>
        <dbReference type="ChEBI" id="CHEBI:15378"/>
        <dbReference type="ChEBI" id="CHEBI:57287"/>
        <dbReference type="ChEBI" id="CHEBI:57288"/>
        <dbReference type="ChEBI" id="CHEBI:57776"/>
        <dbReference type="ChEBI" id="CHEBI:58516"/>
        <dbReference type="EC" id="2.3.1.157"/>
    </reaction>
</comment>
<comment type="catalytic activity">
    <reaction evidence="1">
        <text>N-acetyl-alpha-D-glucosamine 1-phosphate + UTP + H(+) = UDP-N-acetyl-alpha-D-glucosamine + diphosphate</text>
        <dbReference type="Rhea" id="RHEA:13509"/>
        <dbReference type="ChEBI" id="CHEBI:15378"/>
        <dbReference type="ChEBI" id="CHEBI:33019"/>
        <dbReference type="ChEBI" id="CHEBI:46398"/>
        <dbReference type="ChEBI" id="CHEBI:57705"/>
        <dbReference type="ChEBI" id="CHEBI:57776"/>
        <dbReference type="EC" id="2.7.7.23"/>
    </reaction>
</comment>
<comment type="cofactor">
    <cofactor evidence="1">
        <name>Mg(2+)</name>
        <dbReference type="ChEBI" id="CHEBI:18420"/>
    </cofactor>
    <text evidence="1">Binds 1 Mg(2+) ion per subunit.</text>
</comment>
<comment type="pathway">
    <text evidence="1">Nucleotide-sugar biosynthesis; UDP-N-acetyl-alpha-D-glucosamine biosynthesis; N-acetyl-alpha-D-glucosamine 1-phosphate from alpha-D-glucosamine 6-phosphate (route II): step 2/2.</text>
</comment>
<comment type="pathway">
    <text evidence="1">Nucleotide-sugar biosynthesis; UDP-N-acetyl-alpha-D-glucosamine biosynthesis; UDP-N-acetyl-alpha-D-glucosamine from N-acetyl-alpha-D-glucosamine 1-phosphate: step 1/1.</text>
</comment>
<comment type="pathway">
    <text evidence="1">Bacterial outer membrane biogenesis; LPS lipid A biosynthesis.</text>
</comment>
<comment type="subunit">
    <text evidence="1">Homotrimer.</text>
</comment>
<comment type="subcellular location">
    <subcellularLocation>
        <location evidence="1">Cytoplasm</location>
    </subcellularLocation>
</comment>
<comment type="similarity">
    <text evidence="1">In the N-terminal section; belongs to the N-acetylglucosamine-1-phosphate uridyltransferase family.</text>
</comment>
<comment type="similarity">
    <text evidence="1">In the C-terminal section; belongs to the transferase hexapeptide repeat family.</text>
</comment>
<sequence>MTQPLHVIILAAGAGKRMKSVLPKVLQPIAGQPMLAHVIDAARELQPAAIHVVHGHGGEAVRQYFAGQPDLQWAEQAQQLGTGHAVAQAMPQVPDLAQVLVLYGDVPLIRAQTLRDLLAQPGRLAVLVADVDDPTGYGRVLRDAEGKVGAIIEQKDATDDQLRVRTINTGIIAAESTALRRWLSQLSNSNAQGEYYLTDVFAFAAHEYTPAEMALVADAQEAEGANDPWQLSQLERAWQRRAVRALCAQGARVRDPARLDIRGTVTVGSDVLIDVDVVLEGKVVLGDGVTVGPFNRLKDVNLGPGTDVRAHCDLEGVVTEGAAQIGPFARLRPGTVLADGVHVGNFVETKKVTLGVGSKANHLTYLGDAVIGSKVNIGAGTITCNYDGVNKSTTTIGDNAFIGSNSSLVAPVTIGDGATIAAGSVITRNAPDGKLTLARARQETIDGWKRPLKKS</sequence>
<proteinExistence type="evidence at protein level"/>
<name>GLMU_STRMK</name>
<gene>
    <name evidence="1" type="primary">glmU</name>
    <name type="ordered locus">Smlt4108</name>
</gene>
<reference key="1">
    <citation type="journal article" date="2008" name="Genome Biol.">
        <title>The complete genome, comparative and functional analysis of Stenotrophomonas maltophilia reveals an organism heavily shielded by drug resistance determinants.</title>
        <authorList>
            <person name="Crossman L.C."/>
            <person name="Gould V.C."/>
            <person name="Dow J.M."/>
            <person name="Vernikos G.S."/>
            <person name="Okazaki A."/>
            <person name="Sebaihia M."/>
            <person name="Saunders D."/>
            <person name="Arrowsmith C."/>
            <person name="Carver T."/>
            <person name="Peters N."/>
            <person name="Adlem E."/>
            <person name="Kerhornou A."/>
            <person name="Lord A."/>
            <person name="Murphy L."/>
            <person name="Seeger K."/>
            <person name="Squares R."/>
            <person name="Rutter S."/>
            <person name="Quail M.A."/>
            <person name="Rajandream M.A."/>
            <person name="Harris D."/>
            <person name="Churcher C."/>
            <person name="Bentley S.D."/>
            <person name="Parkhill J."/>
            <person name="Thomson N.R."/>
            <person name="Avison M.B."/>
        </authorList>
    </citation>
    <scope>NUCLEOTIDE SEQUENCE [LARGE SCALE GENOMIC DNA]</scope>
    <source>
        <strain>K279a</strain>
    </source>
</reference>
<organism>
    <name type="scientific">Stenotrophomonas maltophilia (strain K279a)</name>
    <dbReference type="NCBI Taxonomy" id="522373"/>
    <lineage>
        <taxon>Bacteria</taxon>
        <taxon>Pseudomonadati</taxon>
        <taxon>Pseudomonadota</taxon>
        <taxon>Gammaproteobacteria</taxon>
        <taxon>Lysobacterales</taxon>
        <taxon>Lysobacteraceae</taxon>
        <taxon>Stenotrophomonas</taxon>
        <taxon>Stenotrophomonas maltophilia group</taxon>
    </lineage>
</organism>
<keyword id="KW-0002">3D-structure</keyword>
<keyword id="KW-0012">Acyltransferase</keyword>
<keyword id="KW-0133">Cell shape</keyword>
<keyword id="KW-0961">Cell wall biogenesis/degradation</keyword>
<keyword id="KW-0963">Cytoplasm</keyword>
<keyword id="KW-0460">Magnesium</keyword>
<keyword id="KW-0479">Metal-binding</keyword>
<keyword id="KW-0511">Multifunctional enzyme</keyword>
<keyword id="KW-0548">Nucleotidyltransferase</keyword>
<keyword id="KW-0573">Peptidoglycan synthesis</keyword>
<keyword id="KW-1185">Reference proteome</keyword>
<keyword id="KW-0677">Repeat</keyword>
<keyword id="KW-0808">Transferase</keyword>
<accession>B2FHY5</accession>
<feature type="chain" id="PRO_1000186495" description="Bifunctional protein GlmU">
    <location>
        <begin position="1"/>
        <end position="455"/>
    </location>
</feature>
<feature type="region of interest" description="Pyrophosphorylase" evidence="1">
    <location>
        <begin position="1"/>
        <end position="228"/>
    </location>
</feature>
<feature type="region of interest" description="Linker" evidence="1">
    <location>
        <begin position="229"/>
        <end position="249"/>
    </location>
</feature>
<feature type="region of interest" description="N-acetyltransferase" evidence="1">
    <location>
        <begin position="250"/>
        <end position="455"/>
    </location>
</feature>
<feature type="active site" description="Proton acceptor" evidence="1">
    <location>
        <position position="362"/>
    </location>
</feature>
<feature type="binding site" evidence="1">
    <location>
        <begin position="10"/>
        <end position="13"/>
    </location>
    <ligand>
        <name>UDP-N-acetyl-alpha-D-glucosamine</name>
        <dbReference type="ChEBI" id="CHEBI:57705"/>
    </ligand>
</feature>
<feature type="binding site" evidence="1">
    <location>
        <position position="24"/>
    </location>
    <ligand>
        <name>UDP-N-acetyl-alpha-D-glucosamine</name>
        <dbReference type="ChEBI" id="CHEBI:57705"/>
    </ligand>
</feature>
<feature type="binding site" evidence="1">
    <location>
        <position position="76"/>
    </location>
    <ligand>
        <name>UDP-N-acetyl-alpha-D-glucosamine</name>
        <dbReference type="ChEBI" id="CHEBI:57705"/>
    </ligand>
</feature>
<feature type="binding site" evidence="1">
    <location>
        <begin position="81"/>
        <end position="82"/>
    </location>
    <ligand>
        <name>UDP-N-acetyl-alpha-D-glucosamine</name>
        <dbReference type="ChEBI" id="CHEBI:57705"/>
    </ligand>
</feature>
<feature type="binding site" evidence="1">
    <location>
        <begin position="103"/>
        <end position="105"/>
    </location>
    <ligand>
        <name>UDP-N-acetyl-alpha-D-glucosamine</name>
        <dbReference type="ChEBI" id="CHEBI:57705"/>
    </ligand>
</feature>
<feature type="binding site" evidence="1">
    <location>
        <position position="105"/>
    </location>
    <ligand>
        <name>Mg(2+)</name>
        <dbReference type="ChEBI" id="CHEBI:18420"/>
    </ligand>
</feature>
<feature type="binding site" evidence="1">
    <location>
        <position position="138"/>
    </location>
    <ligand>
        <name>UDP-N-acetyl-alpha-D-glucosamine</name>
        <dbReference type="ChEBI" id="CHEBI:57705"/>
    </ligand>
</feature>
<feature type="binding site" evidence="1">
    <location>
        <position position="153"/>
    </location>
    <ligand>
        <name>UDP-N-acetyl-alpha-D-glucosamine</name>
        <dbReference type="ChEBI" id="CHEBI:57705"/>
    </ligand>
</feature>
<feature type="binding site" evidence="1">
    <location>
        <position position="168"/>
    </location>
    <ligand>
        <name>UDP-N-acetyl-alpha-D-glucosamine</name>
        <dbReference type="ChEBI" id="CHEBI:57705"/>
    </ligand>
</feature>
<feature type="binding site" evidence="1">
    <location>
        <position position="226"/>
    </location>
    <ligand>
        <name>Mg(2+)</name>
        <dbReference type="ChEBI" id="CHEBI:18420"/>
    </ligand>
</feature>
<feature type="binding site" evidence="1">
    <location>
        <position position="226"/>
    </location>
    <ligand>
        <name>UDP-N-acetyl-alpha-D-glucosamine</name>
        <dbReference type="ChEBI" id="CHEBI:57705"/>
    </ligand>
</feature>
<feature type="binding site" evidence="1">
    <location>
        <position position="332"/>
    </location>
    <ligand>
        <name>UDP-N-acetyl-alpha-D-glucosamine</name>
        <dbReference type="ChEBI" id="CHEBI:57705"/>
    </ligand>
</feature>
<feature type="binding site" evidence="1">
    <location>
        <position position="350"/>
    </location>
    <ligand>
        <name>UDP-N-acetyl-alpha-D-glucosamine</name>
        <dbReference type="ChEBI" id="CHEBI:57705"/>
    </ligand>
</feature>
<feature type="binding site" evidence="1">
    <location>
        <position position="365"/>
    </location>
    <ligand>
        <name>UDP-N-acetyl-alpha-D-glucosamine</name>
        <dbReference type="ChEBI" id="CHEBI:57705"/>
    </ligand>
</feature>
<feature type="binding site" evidence="1">
    <location>
        <position position="376"/>
    </location>
    <ligand>
        <name>UDP-N-acetyl-alpha-D-glucosamine</name>
        <dbReference type="ChEBI" id="CHEBI:57705"/>
    </ligand>
</feature>
<feature type="binding site" evidence="1">
    <location>
        <position position="379"/>
    </location>
    <ligand>
        <name>acetyl-CoA</name>
        <dbReference type="ChEBI" id="CHEBI:57288"/>
    </ligand>
</feature>
<feature type="binding site" evidence="1">
    <location>
        <begin position="385"/>
        <end position="386"/>
    </location>
    <ligand>
        <name>acetyl-CoA</name>
        <dbReference type="ChEBI" id="CHEBI:57288"/>
    </ligand>
</feature>
<feature type="binding site" evidence="1">
    <location>
        <position position="404"/>
    </location>
    <ligand>
        <name>acetyl-CoA</name>
        <dbReference type="ChEBI" id="CHEBI:57288"/>
    </ligand>
</feature>
<feature type="binding site" evidence="1">
    <location>
        <position position="422"/>
    </location>
    <ligand>
        <name>acetyl-CoA</name>
        <dbReference type="ChEBI" id="CHEBI:57288"/>
    </ligand>
</feature>
<feature type="binding site" evidence="1">
    <location>
        <position position="439"/>
    </location>
    <ligand>
        <name>acetyl-CoA</name>
        <dbReference type="ChEBI" id="CHEBI:57288"/>
    </ligand>
</feature>
<feature type="strand" evidence="2">
    <location>
        <begin position="5"/>
        <end position="11"/>
    </location>
</feature>
<feature type="helix" evidence="2">
    <location>
        <begin position="16"/>
        <end position="18"/>
    </location>
</feature>
<feature type="strand" evidence="2">
    <location>
        <begin position="20"/>
        <end position="22"/>
    </location>
</feature>
<feature type="helix" evidence="2">
    <location>
        <begin position="24"/>
        <end position="26"/>
    </location>
</feature>
<feature type="strand" evidence="2">
    <location>
        <begin position="27"/>
        <end position="33"/>
    </location>
</feature>
<feature type="helix" evidence="2">
    <location>
        <begin position="34"/>
        <end position="43"/>
    </location>
</feature>
<feature type="strand" evidence="2">
    <location>
        <begin position="48"/>
        <end position="54"/>
    </location>
</feature>
<feature type="helix" evidence="2">
    <location>
        <begin position="58"/>
        <end position="64"/>
    </location>
</feature>
<feature type="turn" evidence="2">
    <location>
        <begin position="65"/>
        <end position="67"/>
    </location>
</feature>
<feature type="strand" evidence="2">
    <location>
        <begin position="72"/>
        <end position="75"/>
    </location>
</feature>
<feature type="helix" evidence="2">
    <location>
        <begin position="82"/>
        <end position="89"/>
    </location>
</feature>
<feature type="helix" evidence="2">
    <location>
        <begin position="90"/>
        <end position="92"/>
    </location>
</feature>
<feature type="strand" evidence="2">
    <location>
        <begin position="98"/>
        <end position="103"/>
    </location>
</feature>
<feature type="helix" evidence="2">
    <location>
        <begin position="111"/>
        <end position="118"/>
    </location>
</feature>
<feature type="strand" evidence="2">
    <location>
        <begin position="122"/>
        <end position="130"/>
    </location>
</feature>
<feature type="strand" evidence="2">
    <location>
        <begin position="137"/>
        <end position="143"/>
    </location>
</feature>
<feature type="helix" evidence="2">
    <location>
        <begin position="144"/>
        <end position="146"/>
    </location>
</feature>
<feature type="strand" evidence="2">
    <location>
        <begin position="147"/>
        <end position="152"/>
    </location>
</feature>
<feature type="helix" evidence="2">
    <location>
        <begin position="161"/>
        <end position="163"/>
    </location>
</feature>
<feature type="strand" evidence="2">
    <location>
        <begin position="166"/>
        <end position="175"/>
    </location>
</feature>
<feature type="helix" evidence="2">
    <location>
        <begin position="176"/>
        <end position="185"/>
    </location>
</feature>
<feature type="strand" evidence="2">
    <location>
        <begin position="190"/>
        <end position="192"/>
    </location>
</feature>
<feature type="helix" evidence="2">
    <location>
        <begin position="197"/>
        <end position="199"/>
    </location>
</feature>
<feature type="helix" evidence="2">
    <location>
        <begin position="200"/>
        <end position="206"/>
    </location>
</feature>
<feature type="strand" evidence="2">
    <location>
        <begin position="211"/>
        <end position="215"/>
    </location>
</feature>
<feature type="helix" evidence="2">
    <location>
        <begin position="219"/>
        <end position="222"/>
    </location>
</feature>
<feature type="helix" evidence="2">
    <location>
        <begin position="228"/>
        <end position="248"/>
    </location>
</feature>
<feature type="strand" evidence="2">
    <location>
        <begin position="252"/>
        <end position="254"/>
    </location>
</feature>
<feature type="helix" evidence="2">
    <location>
        <begin position="256"/>
        <end position="258"/>
    </location>
</feature>
<feature type="strand" evidence="2">
    <location>
        <begin position="259"/>
        <end position="267"/>
    </location>
</feature>
<feature type="strand" evidence="2">
    <location>
        <begin position="275"/>
        <end position="285"/>
    </location>
</feature>
<feature type="strand" evidence="2">
    <location>
        <begin position="293"/>
        <end position="302"/>
    </location>
</feature>
<feature type="strand" evidence="2">
    <location>
        <begin position="310"/>
        <end position="321"/>
    </location>
</feature>
<feature type="strand" evidence="2">
    <location>
        <begin position="327"/>
        <end position="331"/>
    </location>
</feature>
<feature type="strand" evidence="2">
    <location>
        <begin position="335"/>
        <end position="337"/>
    </location>
</feature>
<feature type="strand" evidence="2">
    <location>
        <begin position="342"/>
        <end position="354"/>
    </location>
</feature>
<feature type="strand" evidence="2">
    <location>
        <begin position="359"/>
        <end position="371"/>
    </location>
</feature>
<feature type="strand" evidence="2">
    <location>
        <begin position="382"/>
        <end position="384"/>
    </location>
</feature>
<feature type="strand" evidence="2">
    <location>
        <begin position="386"/>
        <end position="389"/>
    </location>
</feature>
<feature type="strand" evidence="2">
    <location>
        <begin position="394"/>
        <end position="396"/>
    </location>
</feature>
<feature type="strand" evidence="2">
    <location>
        <begin position="407"/>
        <end position="414"/>
    </location>
</feature>
<feature type="strand" evidence="2">
    <location>
        <begin position="434"/>
        <end position="436"/>
    </location>
</feature>
<dbReference type="EC" id="2.7.7.23" evidence="1"/>
<dbReference type="EC" id="2.3.1.157" evidence="1"/>
<dbReference type="EMBL" id="AM743169">
    <property type="protein sequence ID" value="CAQ47499.1"/>
    <property type="molecule type" value="Genomic_DNA"/>
</dbReference>
<dbReference type="RefSeq" id="WP_012481318.1">
    <property type="nucleotide sequence ID" value="NC_010943.1"/>
</dbReference>
<dbReference type="PDB" id="7K47">
    <property type="method" value="X-ray"/>
    <property type="resolution" value="2.90 A"/>
    <property type="chains" value="A=1-455"/>
</dbReference>
<dbReference type="PDBsum" id="7K47"/>
<dbReference type="SMR" id="B2FHY5"/>
<dbReference type="EnsemblBacteria" id="CAQ47499">
    <property type="protein sequence ID" value="CAQ47499"/>
    <property type="gene ID" value="Smlt4108"/>
</dbReference>
<dbReference type="KEGG" id="sml:Smlt4108"/>
<dbReference type="PATRIC" id="fig|522373.3.peg.3879"/>
<dbReference type="eggNOG" id="COG1207">
    <property type="taxonomic scope" value="Bacteria"/>
</dbReference>
<dbReference type="HOGENOM" id="CLU_029499_15_2_6"/>
<dbReference type="UniPathway" id="UPA00113">
    <property type="reaction ID" value="UER00532"/>
</dbReference>
<dbReference type="UniPathway" id="UPA00113">
    <property type="reaction ID" value="UER00533"/>
</dbReference>
<dbReference type="UniPathway" id="UPA00973"/>
<dbReference type="Proteomes" id="UP000008840">
    <property type="component" value="Chromosome"/>
</dbReference>
<dbReference type="GO" id="GO:0005737">
    <property type="term" value="C:cytoplasm"/>
    <property type="evidence" value="ECO:0007669"/>
    <property type="project" value="UniProtKB-SubCell"/>
</dbReference>
<dbReference type="GO" id="GO:0016020">
    <property type="term" value="C:membrane"/>
    <property type="evidence" value="ECO:0007669"/>
    <property type="project" value="GOC"/>
</dbReference>
<dbReference type="GO" id="GO:0019134">
    <property type="term" value="F:glucosamine-1-phosphate N-acetyltransferase activity"/>
    <property type="evidence" value="ECO:0007669"/>
    <property type="project" value="UniProtKB-UniRule"/>
</dbReference>
<dbReference type="GO" id="GO:0000287">
    <property type="term" value="F:magnesium ion binding"/>
    <property type="evidence" value="ECO:0007669"/>
    <property type="project" value="UniProtKB-UniRule"/>
</dbReference>
<dbReference type="GO" id="GO:0003977">
    <property type="term" value="F:UDP-N-acetylglucosamine diphosphorylase activity"/>
    <property type="evidence" value="ECO:0007669"/>
    <property type="project" value="UniProtKB-UniRule"/>
</dbReference>
<dbReference type="GO" id="GO:0000902">
    <property type="term" value="P:cell morphogenesis"/>
    <property type="evidence" value="ECO:0007669"/>
    <property type="project" value="UniProtKB-UniRule"/>
</dbReference>
<dbReference type="GO" id="GO:0071555">
    <property type="term" value="P:cell wall organization"/>
    <property type="evidence" value="ECO:0007669"/>
    <property type="project" value="UniProtKB-KW"/>
</dbReference>
<dbReference type="GO" id="GO:0009245">
    <property type="term" value="P:lipid A biosynthetic process"/>
    <property type="evidence" value="ECO:0007669"/>
    <property type="project" value="UniProtKB-UniRule"/>
</dbReference>
<dbReference type="GO" id="GO:0009252">
    <property type="term" value="P:peptidoglycan biosynthetic process"/>
    <property type="evidence" value="ECO:0007669"/>
    <property type="project" value="UniProtKB-UniRule"/>
</dbReference>
<dbReference type="GO" id="GO:0008360">
    <property type="term" value="P:regulation of cell shape"/>
    <property type="evidence" value="ECO:0007669"/>
    <property type="project" value="UniProtKB-KW"/>
</dbReference>
<dbReference type="GO" id="GO:0006048">
    <property type="term" value="P:UDP-N-acetylglucosamine biosynthetic process"/>
    <property type="evidence" value="ECO:0007669"/>
    <property type="project" value="UniProtKB-UniPathway"/>
</dbReference>
<dbReference type="CDD" id="cd02540">
    <property type="entry name" value="GT2_GlmU_N_bac"/>
    <property type="match status" value="1"/>
</dbReference>
<dbReference type="CDD" id="cd03353">
    <property type="entry name" value="LbH_GlmU_C"/>
    <property type="match status" value="1"/>
</dbReference>
<dbReference type="Gene3D" id="2.160.10.10">
    <property type="entry name" value="Hexapeptide repeat proteins"/>
    <property type="match status" value="1"/>
</dbReference>
<dbReference type="Gene3D" id="3.90.550.10">
    <property type="entry name" value="Spore Coat Polysaccharide Biosynthesis Protein SpsA, Chain A"/>
    <property type="match status" value="1"/>
</dbReference>
<dbReference type="HAMAP" id="MF_01631">
    <property type="entry name" value="GlmU"/>
    <property type="match status" value="1"/>
</dbReference>
<dbReference type="InterPro" id="IPR005882">
    <property type="entry name" value="Bifunctional_GlmU"/>
</dbReference>
<dbReference type="InterPro" id="IPR050065">
    <property type="entry name" value="GlmU-like"/>
</dbReference>
<dbReference type="InterPro" id="IPR038009">
    <property type="entry name" value="GlmU_C_LbH"/>
</dbReference>
<dbReference type="InterPro" id="IPR001451">
    <property type="entry name" value="Hexapep"/>
</dbReference>
<dbReference type="InterPro" id="IPR025877">
    <property type="entry name" value="MobA-like_NTP_Trfase"/>
</dbReference>
<dbReference type="InterPro" id="IPR029044">
    <property type="entry name" value="Nucleotide-diphossugar_trans"/>
</dbReference>
<dbReference type="InterPro" id="IPR011004">
    <property type="entry name" value="Trimer_LpxA-like_sf"/>
</dbReference>
<dbReference type="NCBIfam" id="TIGR01173">
    <property type="entry name" value="glmU"/>
    <property type="match status" value="1"/>
</dbReference>
<dbReference type="PANTHER" id="PTHR43584:SF3">
    <property type="entry name" value="BIFUNCTIONAL PROTEIN GLMU"/>
    <property type="match status" value="1"/>
</dbReference>
<dbReference type="PANTHER" id="PTHR43584">
    <property type="entry name" value="NUCLEOTIDYL TRANSFERASE"/>
    <property type="match status" value="1"/>
</dbReference>
<dbReference type="Pfam" id="PF00132">
    <property type="entry name" value="Hexapep"/>
    <property type="match status" value="1"/>
</dbReference>
<dbReference type="Pfam" id="PF12804">
    <property type="entry name" value="NTP_transf_3"/>
    <property type="match status" value="1"/>
</dbReference>
<dbReference type="SUPFAM" id="SSF53448">
    <property type="entry name" value="Nucleotide-diphospho-sugar transferases"/>
    <property type="match status" value="1"/>
</dbReference>
<dbReference type="SUPFAM" id="SSF51161">
    <property type="entry name" value="Trimeric LpxA-like enzymes"/>
    <property type="match status" value="1"/>
</dbReference>
<protein>
    <recommendedName>
        <fullName evidence="1">Bifunctional protein GlmU</fullName>
    </recommendedName>
    <domain>
        <recommendedName>
            <fullName evidence="1">UDP-N-acetylglucosamine pyrophosphorylase</fullName>
            <ecNumber evidence="1">2.7.7.23</ecNumber>
        </recommendedName>
        <alternativeName>
            <fullName evidence="1">N-acetylglucosamine-1-phosphate uridyltransferase</fullName>
        </alternativeName>
    </domain>
    <domain>
        <recommendedName>
            <fullName evidence="1">Glucosamine-1-phosphate N-acetyltransferase</fullName>
            <ecNumber evidence="1">2.3.1.157</ecNumber>
        </recommendedName>
    </domain>
</protein>